<sequence>MRDQERTLNQDVERCINVLQDFLDTGSAKAISVFSNKTSENEDWLEEIRVKYRIKDNDELQAIKMLKQKRLDQLEALESKVDYYEKLCDELEEFQDEMEVKAKLEQNRRSRFDSMTRK</sequence>
<gene>
    <name type="primary">BLI1</name>
    <name type="ordered locus">ZYRO0E06424g</name>
</gene>
<keyword id="KW-0175">Coiled coil</keyword>
<keyword id="KW-0967">Endosome</keyword>
<keyword id="KW-1185">Reference proteome</keyword>
<keyword id="KW-0813">Transport</keyword>
<name>BLI1_ZYGRC</name>
<comment type="function">
    <text evidence="1">Component of the biogenesis of lysosome-related organelles complex-1 (BLOC-1) involved in endosomal cargo sorting.</text>
</comment>
<comment type="subunit">
    <text evidence="1">Component of the biogenesis of lysosome-related organelles complex-1 (BLOC-1).</text>
</comment>
<comment type="subcellular location">
    <subcellularLocation>
        <location evidence="1">Endosome</location>
    </subcellularLocation>
</comment>
<comment type="similarity">
    <text evidence="3">Belongs to the BLI1 family.</text>
</comment>
<organism>
    <name type="scientific">Zygosaccharomyces rouxii (strain ATCC 2623 / CBS 732 / NBRC 1130 / NCYC 568 / NRRL Y-229)</name>
    <dbReference type="NCBI Taxonomy" id="559307"/>
    <lineage>
        <taxon>Eukaryota</taxon>
        <taxon>Fungi</taxon>
        <taxon>Dikarya</taxon>
        <taxon>Ascomycota</taxon>
        <taxon>Saccharomycotina</taxon>
        <taxon>Saccharomycetes</taxon>
        <taxon>Saccharomycetales</taxon>
        <taxon>Saccharomycetaceae</taxon>
        <taxon>Zygosaccharomyces</taxon>
    </lineage>
</organism>
<accession>C5E4I6</accession>
<evidence type="ECO:0000250" key="1"/>
<evidence type="ECO:0000255" key="2"/>
<evidence type="ECO:0000305" key="3"/>
<dbReference type="EMBL" id="CU928181">
    <property type="protein sequence ID" value="CAR30947.1"/>
    <property type="molecule type" value="Genomic_DNA"/>
</dbReference>
<dbReference type="RefSeq" id="XP_002499202.1">
    <property type="nucleotide sequence ID" value="XM_002499157.1"/>
</dbReference>
<dbReference type="FunCoup" id="C5E4I6">
    <property type="interactions" value="46"/>
</dbReference>
<dbReference type="STRING" id="559307.C5E4I6"/>
<dbReference type="GeneID" id="8204756"/>
<dbReference type="KEGG" id="zro:ZYRO0E06424g"/>
<dbReference type="HOGENOM" id="CLU_168467_0_0_1"/>
<dbReference type="InParanoid" id="C5E4I6"/>
<dbReference type="Proteomes" id="UP000008536">
    <property type="component" value="Chromosome E"/>
</dbReference>
<dbReference type="GO" id="GO:0005768">
    <property type="term" value="C:endosome"/>
    <property type="evidence" value="ECO:0007669"/>
    <property type="project" value="UniProtKB-SubCell"/>
</dbReference>
<dbReference type="InterPro" id="IPR020491">
    <property type="entry name" value="BLI1"/>
</dbReference>
<dbReference type="Pfam" id="PF17324">
    <property type="entry name" value="BLI1"/>
    <property type="match status" value="1"/>
</dbReference>
<protein>
    <recommendedName>
        <fullName>Biogenesis of lysosome-related organelles complex 1 subunit BLI1</fullName>
        <shortName>BLOC-1 subunit BLI1</shortName>
    </recommendedName>
    <alternativeName>
        <fullName>BLOC-1 interactor 1</fullName>
    </alternativeName>
</protein>
<feature type="chain" id="PRO_0000410627" description="Biogenesis of lysosome-related organelles complex 1 subunit BLI1">
    <location>
        <begin position="1"/>
        <end position="118"/>
    </location>
</feature>
<feature type="coiled-coil region" evidence="2">
    <location>
        <begin position="55"/>
        <end position="104"/>
    </location>
</feature>
<proteinExistence type="inferred from homology"/>
<reference key="1">
    <citation type="journal article" date="2009" name="Genome Res.">
        <title>Comparative genomics of protoploid Saccharomycetaceae.</title>
        <authorList>
            <consortium name="The Genolevures Consortium"/>
            <person name="Souciet J.-L."/>
            <person name="Dujon B."/>
            <person name="Gaillardin C."/>
            <person name="Johnston M."/>
            <person name="Baret P.V."/>
            <person name="Cliften P."/>
            <person name="Sherman D.J."/>
            <person name="Weissenbach J."/>
            <person name="Westhof E."/>
            <person name="Wincker P."/>
            <person name="Jubin C."/>
            <person name="Poulain J."/>
            <person name="Barbe V."/>
            <person name="Segurens B."/>
            <person name="Artiguenave F."/>
            <person name="Anthouard V."/>
            <person name="Vacherie B."/>
            <person name="Val M.-E."/>
            <person name="Fulton R.S."/>
            <person name="Minx P."/>
            <person name="Wilson R."/>
            <person name="Durrens P."/>
            <person name="Jean G."/>
            <person name="Marck C."/>
            <person name="Martin T."/>
            <person name="Nikolski M."/>
            <person name="Rolland T."/>
            <person name="Seret M.-L."/>
            <person name="Casaregola S."/>
            <person name="Despons L."/>
            <person name="Fairhead C."/>
            <person name="Fischer G."/>
            <person name="Lafontaine I."/>
            <person name="Leh V."/>
            <person name="Lemaire M."/>
            <person name="de Montigny J."/>
            <person name="Neuveglise C."/>
            <person name="Thierry A."/>
            <person name="Blanc-Lenfle I."/>
            <person name="Bleykasten C."/>
            <person name="Diffels J."/>
            <person name="Fritsch E."/>
            <person name="Frangeul L."/>
            <person name="Goeffon A."/>
            <person name="Jauniaux N."/>
            <person name="Kachouri-Lafond R."/>
            <person name="Payen C."/>
            <person name="Potier S."/>
            <person name="Pribylova L."/>
            <person name="Ozanne C."/>
            <person name="Richard G.-F."/>
            <person name="Sacerdot C."/>
            <person name="Straub M.-L."/>
            <person name="Talla E."/>
        </authorList>
    </citation>
    <scope>NUCLEOTIDE SEQUENCE [LARGE SCALE GENOMIC DNA]</scope>
    <source>
        <strain>ATCC 2623 / CBS 732 / BCRC 21506 / NBRC 1130 / NCYC 568 / NRRL Y-229</strain>
    </source>
</reference>